<accession>Q9FH92</accession>
<reference key="1">
    <citation type="journal article" date="2000" name="DNA Res.">
        <title>Structural analysis of Arabidopsis thaliana chromosome 5. X. Sequence features of the regions of 3,076,755 bp covered by sixty P1 and TAC clones.</title>
        <authorList>
            <person name="Sato S."/>
            <person name="Nakamura Y."/>
            <person name="Kaneko T."/>
            <person name="Katoh T."/>
            <person name="Asamizu E."/>
            <person name="Kotani H."/>
            <person name="Tabata S."/>
        </authorList>
    </citation>
    <scope>NUCLEOTIDE SEQUENCE [LARGE SCALE GENOMIC DNA]</scope>
    <source>
        <strain>cv. Columbia</strain>
    </source>
</reference>
<reference key="2">
    <citation type="journal article" date="2017" name="Plant J.">
        <title>Araport11: a complete reannotation of the Arabidopsis thaliana reference genome.</title>
        <authorList>
            <person name="Cheng C.Y."/>
            <person name="Krishnakumar V."/>
            <person name="Chan A.P."/>
            <person name="Thibaud-Nissen F."/>
            <person name="Schobel S."/>
            <person name="Town C.D."/>
        </authorList>
    </citation>
    <scope>GENOME REANNOTATION</scope>
    <source>
        <strain>cv. Columbia</strain>
    </source>
</reference>
<reference key="3">
    <citation type="journal article" date="2003" name="Science">
        <title>Empirical analysis of transcriptional activity in the Arabidopsis genome.</title>
        <authorList>
            <person name="Yamada K."/>
            <person name="Lim J."/>
            <person name="Dale J.M."/>
            <person name="Chen H."/>
            <person name="Shinn P."/>
            <person name="Palm C.J."/>
            <person name="Southwick A.M."/>
            <person name="Wu H.C."/>
            <person name="Kim C.J."/>
            <person name="Nguyen M."/>
            <person name="Pham P.K."/>
            <person name="Cheuk R.F."/>
            <person name="Karlin-Newmann G."/>
            <person name="Liu S.X."/>
            <person name="Lam B."/>
            <person name="Sakano H."/>
            <person name="Wu T."/>
            <person name="Yu G."/>
            <person name="Miranda M."/>
            <person name="Quach H.L."/>
            <person name="Tripp M."/>
            <person name="Chang C.H."/>
            <person name="Lee J.M."/>
            <person name="Toriumi M.J."/>
            <person name="Chan M.M."/>
            <person name="Tang C.C."/>
            <person name="Onodera C.S."/>
            <person name="Deng J.M."/>
            <person name="Akiyama K."/>
            <person name="Ansari Y."/>
            <person name="Arakawa T."/>
            <person name="Banh J."/>
            <person name="Banno F."/>
            <person name="Bowser L."/>
            <person name="Brooks S.Y."/>
            <person name="Carninci P."/>
            <person name="Chao Q."/>
            <person name="Choy N."/>
            <person name="Enju A."/>
            <person name="Goldsmith A.D."/>
            <person name="Gurjal M."/>
            <person name="Hansen N.F."/>
            <person name="Hayashizaki Y."/>
            <person name="Johnson-Hopson C."/>
            <person name="Hsuan V.W."/>
            <person name="Iida K."/>
            <person name="Karnes M."/>
            <person name="Khan S."/>
            <person name="Koesema E."/>
            <person name="Ishida J."/>
            <person name="Jiang P.X."/>
            <person name="Jones T."/>
            <person name="Kawai J."/>
            <person name="Kamiya A."/>
            <person name="Meyers C."/>
            <person name="Nakajima M."/>
            <person name="Narusaka M."/>
            <person name="Seki M."/>
            <person name="Sakurai T."/>
            <person name="Satou M."/>
            <person name="Tamse R."/>
            <person name="Vaysberg M."/>
            <person name="Wallender E.K."/>
            <person name="Wong C."/>
            <person name="Yamamura Y."/>
            <person name="Yuan S."/>
            <person name="Shinozaki K."/>
            <person name="Davis R.W."/>
            <person name="Theologis A."/>
            <person name="Ecker J.R."/>
        </authorList>
    </citation>
    <scope>NUCLEOTIDE SEQUENCE [LARGE SCALE MRNA]</scope>
    <source>
        <strain>cv. Columbia</strain>
    </source>
</reference>
<reference key="4">
    <citation type="submission" date="2006-07" db="EMBL/GenBank/DDBJ databases">
        <title>Large-scale analysis of RIKEN Arabidopsis full-length (RAFL) cDNAs.</title>
        <authorList>
            <person name="Totoki Y."/>
            <person name="Seki M."/>
            <person name="Ishida J."/>
            <person name="Nakajima M."/>
            <person name="Enju A."/>
            <person name="Kamiya A."/>
            <person name="Narusaka M."/>
            <person name="Shin-i T."/>
            <person name="Nakagawa M."/>
            <person name="Sakamoto N."/>
            <person name="Oishi K."/>
            <person name="Kohara Y."/>
            <person name="Kobayashi M."/>
            <person name="Toyoda A."/>
            <person name="Sakaki Y."/>
            <person name="Sakurai T."/>
            <person name="Iida K."/>
            <person name="Akiyama K."/>
            <person name="Satou M."/>
            <person name="Toyoda T."/>
            <person name="Konagaya A."/>
            <person name="Carninci P."/>
            <person name="Kawai J."/>
            <person name="Hayashizaki Y."/>
            <person name="Shinozaki K."/>
        </authorList>
    </citation>
    <scope>NUCLEOTIDE SEQUENCE [LARGE SCALE MRNA]</scope>
    <source>
        <strain>cv. Columbia</strain>
    </source>
</reference>
<reference key="5">
    <citation type="journal article" date="2011" name="Plant J.">
        <title>The DUF579 domain containing proteins IRX15 and IRX15-L affect xylan synthesis in Arabidopsis.</title>
        <authorList>
            <person name="Jensen J.K."/>
            <person name="Kim H."/>
            <person name="Cocuron J.C."/>
            <person name="Orler R."/>
            <person name="Ralph J."/>
            <person name="Wilkerson C.G."/>
        </authorList>
    </citation>
    <scope>FUNCTION</scope>
    <scope>DISRUPTION PHENOTYPE</scope>
    <scope>TISSUE SPECIFICITY</scope>
</reference>
<reference key="6">
    <citation type="journal article" date="2011" name="Plant J.">
        <title>Arabidopsis genes IRREGULAR XYLEM (IRX15) and IRX15L encode DUF579-containing proteins that are essential for normal xylan deposition in the secondary cell wall.</title>
        <authorList>
            <person name="Brown D."/>
            <person name="Wightman R."/>
            <person name="Zhang Z."/>
            <person name="Gomez L.D."/>
            <person name="Atanassov I."/>
            <person name="Bukowski J.P."/>
            <person name="Tryfona T."/>
            <person name="McQueen-Mason S.J."/>
            <person name="Dupree P."/>
            <person name="Turner S."/>
        </authorList>
    </citation>
    <scope>FUNCTION</scope>
    <scope>TISSUE SPECIFICITY</scope>
    <scope>DISRUPTION PHENOTYPE</scope>
    <scope>DEVELOPMENTAL STAGE</scope>
    <scope>SUBCELLULAR LOCATION</scope>
</reference>
<organism>
    <name type="scientific">Arabidopsis thaliana</name>
    <name type="common">Mouse-ear cress</name>
    <dbReference type="NCBI Taxonomy" id="3702"/>
    <lineage>
        <taxon>Eukaryota</taxon>
        <taxon>Viridiplantae</taxon>
        <taxon>Streptophyta</taxon>
        <taxon>Embryophyta</taxon>
        <taxon>Tracheophyta</taxon>
        <taxon>Spermatophyta</taxon>
        <taxon>Magnoliopsida</taxon>
        <taxon>eudicotyledons</taxon>
        <taxon>Gunneridae</taxon>
        <taxon>Pentapetalae</taxon>
        <taxon>rosids</taxon>
        <taxon>malvids</taxon>
        <taxon>Brassicales</taxon>
        <taxon>Brassicaceae</taxon>
        <taxon>Camelineae</taxon>
        <taxon>Arabidopsis</taxon>
    </lineage>
</organism>
<proteinExistence type="evidence at transcript level"/>
<keyword id="KW-0333">Golgi apparatus</keyword>
<keyword id="KW-0472">Membrane</keyword>
<keyword id="KW-1185">Reference proteome</keyword>
<keyword id="KW-0812">Transmembrane</keyword>
<keyword id="KW-1133">Transmembrane helix</keyword>
<feature type="chain" id="PRO_0000420834" description="Protein IRX15-LIKE">
    <location>
        <begin position="1"/>
        <end position="317"/>
    </location>
</feature>
<feature type="transmembrane region" description="Helical" evidence="1">
    <location>
        <begin position="27"/>
        <end position="47"/>
    </location>
</feature>
<evidence type="ECO:0000255" key="1"/>
<evidence type="ECO:0000269" key="2">
    <source>
    </source>
</evidence>
<evidence type="ECO:0000269" key="3">
    <source>
    </source>
</evidence>
<evidence type="ECO:0000305" key="4"/>
<gene>
    <name type="primary">IRX15-L</name>
    <name type="ordered locus">At5g67210</name>
    <name type="ORF">K21H1.17</name>
</gene>
<sequence length="317" mass="35664">MKSGGNTNTKLILVHPYIQKQTSTNRLWLLAFVSFFTIAFLLTLLYTTDSIISSKNNSATVSSAVNSAVTTATISQLPTTAINAMLHYASRSNDSYHMSYGEMKSISDVLRRCSPPCNLLVFGLTHETLLWKSLNHNGRTVFIEENRYYAAYFEEIHPEIEVFDVQYTTKAREARELVSAVKEAARNECRPVQNLLFSDCKLGLNDLPNHVYDVDWDVILVDGPRGDGGDVPGRMSSIFTAAVLARSKKGGNPKTHVFVHDYYRDVERLCGDEFLCRENLVESNDLLAHYVLEKMDKNSTQFCRGRKKKRSVSSPSA</sequence>
<comment type="function">
    <text evidence="2 3">Required for xylan biosynthesis, but not directly involved in catalyzing the addition of sugars to the growing polymer.</text>
</comment>
<comment type="subcellular location">
    <subcellularLocation>
        <location evidence="4">Golgi apparatus membrane</location>
        <topology evidence="4">Single-pass membrane protein</topology>
    </subcellularLocation>
    <text evidence="2">Also located in an unknown intracellular compartment that may have some role in the transport of cell wall polysaccharides into the cell wall.</text>
</comment>
<comment type="tissue specificity">
    <text evidence="2 3">Expressed in roots, rosette leaves, stems and siliques. Expressed in the xylem.</text>
</comment>
<comment type="developmental stage">
    <text evidence="2">Up-regulated during secondary cell wall deposition.</text>
</comment>
<comment type="disruption phenotype">
    <text evidence="2 3">No visible phenotype; due to redundancy with IRX15-L. Irx15 and irx15-l double mutants have a mild collapsed xylem phenotype, irregular secondary cell wall margins in fiber cells, uneven distribution of xylan in the cell wall and a lower degree of xylan polymerization, but no visible growth phenotype.</text>
</comment>
<name>IX15L_ARATH</name>
<dbReference type="EMBL" id="AB020742">
    <property type="protein sequence ID" value="BAB10955.1"/>
    <property type="molecule type" value="Genomic_DNA"/>
</dbReference>
<dbReference type="EMBL" id="CP002688">
    <property type="protein sequence ID" value="AED98314.1"/>
    <property type="molecule type" value="Genomic_DNA"/>
</dbReference>
<dbReference type="EMBL" id="BT003079">
    <property type="protein sequence ID" value="AAO23644.1"/>
    <property type="molecule type" value="mRNA"/>
</dbReference>
<dbReference type="EMBL" id="AK227598">
    <property type="protein sequence ID" value="BAE99589.1"/>
    <property type="molecule type" value="mRNA"/>
</dbReference>
<dbReference type="RefSeq" id="NP_201522.1">
    <property type="nucleotide sequence ID" value="NM_126121.2"/>
</dbReference>
<dbReference type="BioGRID" id="22098">
    <property type="interactions" value="5"/>
</dbReference>
<dbReference type="FunCoup" id="Q9FH92">
    <property type="interactions" value="143"/>
</dbReference>
<dbReference type="IntAct" id="Q9FH92">
    <property type="interactions" value="5"/>
</dbReference>
<dbReference type="STRING" id="3702.Q9FH92"/>
<dbReference type="PaxDb" id="3702-AT5G67210.1"/>
<dbReference type="ProteomicsDB" id="232284"/>
<dbReference type="EnsemblPlants" id="AT5G67210.1">
    <property type="protein sequence ID" value="AT5G67210.1"/>
    <property type="gene ID" value="AT5G67210"/>
</dbReference>
<dbReference type="GeneID" id="836856"/>
<dbReference type="Gramene" id="AT5G67210.1">
    <property type="protein sequence ID" value="AT5G67210.1"/>
    <property type="gene ID" value="AT5G67210"/>
</dbReference>
<dbReference type="KEGG" id="ath:AT5G67210"/>
<dbReference type="Araport" id="AT5G67210"/>
<dbReference type="TAIR" id="AT5G67210">
    <property type="gene designation" value="IRX15-L"/>
</dbReference>
<dbReference type="eggNOG" id="ENOG502QRED">
    <property type="taxonomic scope" value="Eukaryota"/>
</dbReference>
<dbReference type="HOGENOM" id="CLU_053427_2_0_1"/>
<dbReference type="InParanoid" id="Q9FH92"/>
<dbReference type="OMA" id="INAMLHY"/>
<dbReference type="OrthoDB" id="1896682at2759"/>
<dbReference type="PhylomeDB" id="Q9FH92"/>
<dbReference type="PRO" id="PR:Q9FH92"/>
<dbReference type="Proteomes" id="UP000006548">
    <property type="component" value="Chromosome 5"/>
</dbReference>
<dbReference type="ExpressionAtlas" id="Q9FH92">
    <property type="expression patterns" value="baseline and differential"/>
</dbReference>
<dbReference type="GO" id="GO:0005794">
    <property type="term" value="C:Golgi apparatus"/>
    <property type="evidence" value="ECO:0000314"/>
    <property type="project" value="TAIR"/>
</dbReference>
<dbReference type="GO" id="GO:0000139">
    <property type="term" value="C:Golgi membrane"/>
    <property type="evidence" value="ECO:0007669"/>
    <property type="project" value="UniProtKB-SubCell"/>
</dbReference>
<dbReference type="GO" id="GO:0009834">
    <property type="term" value="P:plant-type secondary cell wall biogenesis"/>
    <property type="evidence" value="ECO:0000315"/>
    <property type="project" value="TAIR"/>
</dbReference>
<dbReference type="GO" id="GO:0045492">
    <property type="term" value="P:xylan biosynthetic process"/>
    <property type="evidence" value="ECO:0000315"/>
    <property type="project" value="TAIR"/>
</dbReference>
<dbReference type="InterPro" id="IPR006514">
    <property type="entry name" value="IRX15/GXM/AGM"/>
</dbReference>
<dbReference type="NCBIfam" id="TIGR01627">
    <property type="entry name" value="A_thal_3515"/>
    <property type="match status" value="1"/>
</dbReference>
<dbReference type="PANTHER" id="PTHR31444">
    <property type="entry name" value="OS11G0490100 PROTEIN"/>
    <property type="match status" value="1"/>
</dbReference>
<dbReference type="Pfam" id="PF21729">
    <property type="entry name" value="IRX15_IRX15L_GXM"/>
    <property type="match status" value="1"/>
</dbReference>
<protein>
    <recommendedName>
        <fullName>Protein IRX15-LIKE</fullName>
    </recommendedName>
</protein>